<reference key="1">
    <citation type="journal article" date="2003" name="Proc. Natl. Acad. Sci. U.S.A.">
        <title>The complete genome sequence of Mycobacterium bovis.</title>
        <authorList>
            <person name="Garnier T."/>
            <person name="Eiglmeier K."/>
            <person name="Camus J.-C."/>
            <person name="Medina N."/>
            <person name="Mansoor H."/>
            <person name="Pryor M."/>
            <person name="Duthoy S."/>
            <person name="Grondin S."/>
            <person name="Lacroix C."/>
            <person name="Monsempe C."/>
            <person name="Simon S."/>
            <person name="Harris B."/>
            <person name="Atkin R."/>
            <person name="Doggett J."/>
            <person name="Mayes R."/>
            <person name="Keating L."/>
            <person name="Wheeler P.R."/>
            <person name="Parkhill J."/>
            <person name="Barrell B.G."/>
            <person name="Cole S.T."/>
            <person name="Gordon S.V."/>
            <person name="Hewinson R.G."/>
        </authorList>
    </citation>
    <scope>NUCLEOTIDE SEQUENCE [LARGE SCALE GENOMIC DNA]</scope>
    <source>
        <strain>ATCC BAA-935 / AF2122/97</strain>
    </source>
</reference>
<reference key="2">
    <citation type="journal article" date="2017" name="Genome Announc.">
        <title>Updated reference genome sequence and annotation of Mycobacterium bovis AF2122/97.</title>
        <authorList>
            <person name="Malone K.M."/>
            <person name="Farrell D."/>
            <person name="Stuber T.P."/>
            <person name="Schubert O.T."/>
            <person name="Aebersold R."/>
            <person name="Robbe-Austerman S."/>
            <person name="Gordon S.V."/>
        </authorList>
    </citation>
    <scope>NUCLEOTIDE SEQUENCE [LARGE SCALE GENOMIC DNA]</scope>
    <scope>GENOME REANNOTATION</scope>
    <source>
        <strain>ATCC BAA-935 / AF2122/97</strain>
    </source>
</reference>
<evidence type="ECO:0000250" key="1"/>
<evidence type="ECO:0000250" key="2">
    <source>
        <dbReference type="UniProtKB" id="P06710"/>
    </source>
</evidence>
<evidence type="ECO:0000255" key="3"/>
<evidence type="ECO:0000256" key="4">
    <source>
        <dbReference type="SAM" id="MobiDB-lite"/>
    </source>
</evidence>
<evidence type="ECO:0000305" key="5"/>
<dbReference type="EC" id="2.7.7.7"/>
<dbReference type="EMBL" id="LT708304">
    <property type="protein sequence ID" value="SIU02377.1"/>
    <property type="molecule type" value="Genomic_DNA"/>
</dbReference>
<dbReference type="RefSeq" id="NP_857386.1">
    <property type="nucleotide sequence ID" value="NC_002945.3"/>
</dbReference>
<dbReference type="RefSeq" id="WP_003420417.1">
    <property type="nucleotide sequence ID" value="NC_002945.4"/>
</dbReference>
<dbReference type="SMR" id="P63976"/>
<dbReference type="KEGG" id="mbo:BQ2027_MB3748C"/>
<dbReference type="PATRIC" id="fig|233413.5.peg.4101"/>
<dbReference type="Proteomes" id="UP000001419">
    <property type="component" value="Chromosome"/>
</dbReference>
<dbReference type="GO" id="GO:0009360">
    <property type="term" value="C:DNA polymerase III complex"/>
    <property type="evidence" value="ECO:0007669"/>
    <property type="project" value="InterPro"/>
</dbReference>
<dbReference type="GO" id="GO:0005524">
    <property type="term" value="F:ATP binding"/>
    <property type="evidence" value="ECO:0007669"/>
    <property type="project" value="UniProtKB-KW"/>
</dbReference>
<dbReference type="GO" id="GO:0016887">
    <property type="term" value="F:ATP hydrolysis activity"/>
    <property type="evidence" value="ECO:0007669"/>
    <property type="project" value="InterPro"/>
</dbReference>
<dbReference type="GO" id="GO:0003677">
    <property type="term" value="F:DNA binding"/>
    <property type="evidence" value="ECO:0007669"/>
    <property type="project" value="InterPro"/>
</dbReference>
<dbReference type="GO" id="GO:0003887">
    <property type="term" value="F:DNA-directed DNA polymerase activity"/>
    <property type="evidence" value="ECO:0007669"/>
    <property type="project" value="UniProtKB-KW"/>
</dbReference>
<dbReference type="GO" id="GO:0046872">
    <property type="term" value="F:metal ion binding"/>
    <property type="evidence" value="ECO:0007669"/>
    <property type="project" value="UniProtKB-KW"/>
</dbReference>
<dbReference type="GO" id="GO:0006261">
    <property type="term" value="P:DNA-templated DNA replication"/>
    <property type="evidence" value="ECO:0007669"/>
    <property type="project" value="TreeGrafter"/>
</dbReference>
<dbReference type="CDD" id="cd00009">
    <property type="entry name" value="AAA"/>
    <property type="match status" value="1"/>
</dbReference>
<dbReference type="CDD" id="cd18137">
    <property type="entry name" value="HLD_clamp_pol_III_gamma_tau"/>
    <property type="match status" value="1"/>
</dbReference>
<dbReference type="FunFam" id="1.20.272.10:FF:000003">
    <property type="entry name" value="DNA polymerase III subunit gamma/tau"/>
    <property type="match status" value="1"/>
</dbReference>
<dbReference type="FunFam" id="3.40.50.300:FF:000014">
    <property type="entry name" value="DNA polymerase III subunit gamma/tau"/>
    <property type="match status" value="1"/>
</dbReference>
<dbReference type="Gene3D" id="1.10.8.60">
    <property type="match status" value="1"/>
</dbReference>
<dbReference type="Gene3D" id="1.20.272.10">
    <property type="match status" value="1"/>
</dbReference>
<dbReference type="Gene3D" id="3.40.50.300">
    <property type="entry name" value="P-loop containing nucleotide triphosphate hydrolases"/>
    <property type="match status" value="1"/>
</dbReference>
<dbReference type="InterPro" id="IPR003593">
    <property type="entry name" value="AAA+_ATPase"/>
</dbReference>
<dbReference type="InterPro" id="IPR008921">
    <property type="entry name" value="DNA_pol3_clamp-load_cplx_C"/>
</dbReference>
<dbReference type="InterPro" id="IPR022754">
    <property type="entry name" value="DNA_pol_III_gamma-3"/>
</dbReference>
<dbReference type="InterPro" id="IPR012763">
    <property type="entry name" value="DNA_pol_III_sug/sutau_N"/>
</dbReference>
<dbReference type="InterPro" id="IPR050238">
    <property type="entry name" value="DNA_Rep/Repair_Clamp_Loader"/>
</dbReference>
<dbReference type="InterPro" id="IPR045085">
    <property type="entry name" value="HLD_clamp_pol_III_gamma_tau"/>
</dbReference>
<dbReference type="InterPro" id="IPR027417">
    <property type="entry name" value="P-loop_NTPase"/>
</dbReference>
<dbReference type="NCBIfam" id="TIGR02397">
    <property type="entry name" value="dnaX_nterm"/>
    <property type="match status" value="1"/>
</dbReference>
<dbReference type="NCBIfam" id="NF005846">
    <property type="entry name" value="PRK07764.1-6"/>
    <property type="match status" value="1"/>
</dbReference>
<dbReference type="NCBIfam" id="NF011513">
    <property type="entry name" value="PRK14952.1"/>
    <property type="match status" value="1"/>
</dbReference>
<dbReference type="PANTHER" id="PTHR11669:SF0">
    <property type="entry name" value="PROTEIN STICHEL-LIKE 2"/>
    <property type="match status" value="1"/>
</dbReference>
<dbReference type="PANTHER" id="PTHR11669">
    <property type="entry name" value="REPLICATION FACTOR C / DNA POLYMERASE III GAMMA-TAU SUBUNIT"/>
    <property type="match status" value="1"/>
</dbReference>
<dbReference type="Pfam" id="PF13177">
    <property type="entry name" value="DNA_pol3_delta2"/>
    <property type="match status" value="1"/>
</dbReference>
<dbReference type="Pfam" id="PF12169">
    <property type="entry name" value="DNA_pol3_gamma3"/>
    <property type="match status" value="1"/>
</dbReference>
<dbReference type="Pfam" id="PF22608">
    <property type="entry name" value="DNAX_ATPase_lid"/>
    <property type="match status" value="1"/>
</dbReference>
<dbReference type="SMART" id="SM00382">
    <property type="entry name" value="AAA"/>
    <property type="match status" value="1"/>
</dbReference>
<dbReference type="SUPFAM" id="SSF52540">
    <property type="entry name" value="P-loop containing nucleoside triphosphate hydrolases"/>
    <property type="match status" value="1"/>
</dbReference>
<dbReference type="SUPFAM" id="SSF48019">
    <property type="entry name" value="post-AAA+ oligomerization domain-like"/>
    <property type="match status" value="1"/>
</dbReference>
<keyword id="KW-0067">ATP-binding</keyword>
<keyword id="KW-0235">DNA replication</keyword>
<keyword id="KW-0239">DNA-directed DNA polymerase</keyword>
<keyword id="KW-0479">Metal-binding</keyword>
<keyword id="KW-0547">Nucleotide-binding</keyword>
<keyword id="KW-0548">Nucleotidyltransferase</keyword>
<keyword id="KW-1185">Reference proteome</keyword>
<keyword id="KW-0808">Transferase</keyword>
<keyword id="KW-0862">Zinc</keyword>
<proteinExistence type="inferred from homology"/>
<accession>P63976</accession>
<accession>A0A1R3Y504</accession>
<accession>O69688</accession>
<accession>X2BPN8</accession>
<gene>
    <name type="primary">dnaX</name>
    <name type="synonym">dnaZX</name>
    <name type="ordered locus">BQ2027_MB3748C</name>
</gene>
<organism>
    <name type="scientific">Mycobacterium bovis (strain ATCC BAA-935 / AF2122/97)</name>
    <dbReference type="NCBI Taxonomy" id="233413"/>
    <lineage>
        <taxon>Bacteria</taxon>
        <taxon>Bacillati</taxon>
        <taxon>Actinomycetota</taxon>
        <taxon>Actinomycetes</taxon>
        <taxon>Mycobacteriales</taxon>
        <taxon>Mycobacteriaceae</taxon>
        <taxon>Mycobacterium</taxon>
        <taxon>Mycobacterium tuberculosis complex</taxon>
    </lineage>
</organism>
<feature type="chain" id="PRO_0000105501" description="DNA polymerase III subunit gamma/tau">
    <location>
        <begin position="1"/>
        <end position="578"/>
    </location>
</feature>
<feature type="region of interest" description="Disordered" evidence="4">
    <location>
        <begin position="389"/>
        <end position="423"/>
    </location>
</feature>
<feature type="region of interest" description="Disordered" evidence="4">
    <location>
        <begin position="525"/>
        <end position="559"/>
    </location>
</feature>
<feature type="compositionally biased region" description="Basic and acidic residues" evidence="4">
    <location>
        <begin position="402"/>
        <end position="412"/>
    </location>
</feature>
<feature type="compositionally biased region" description="Basic and acidic residues" evidence="4">
    <location>
        <begin position="536"/>
        <end position="559"/>
    </location>
</feature>
<feature type="binding site" evidence="3">
    <location>
        <begin position="42"/>
        <end position="49"/>
    </location>
    <ligand>
        <name>ATP</name>
        <dbReference type="ChEBI" id="CHEBI:30616"/>
    </ligand>
</feature>
<feature type="binding site" evidence="2">
    <location>
        <position position="61"/>
    </location>
    <ligand>
        <name>Zn(2+)</name>
        <dbReference type="ChEBI" id="CHEBI:29105"/>
    </ligand>
</feature>
<feature type="binding site" evidence="2">
    <location>
        <position position="70"/>
    </location>
    <ligand>
        <name>Zn(2+)</name>
        <dbReference type="ChEBI" id="CHEBI:29105"/>
    </ligand>
</feature>
<feature type="binding site" evidence="2">
    <location>
        <position position="73"/>
    </location>
    <ligand>
        <name>Zn(2+)</name>
        <dbReference type="ChEBI" id="CHEBI:29105"/>
    </ligand>
</feature>
<feature type="binding site" evidence="2">
    <location>
        <position position="76"/>
    </location>
    <ligand>
        <name>Zn(2+)</name>
        <dbReference type="ChEBI" id="CHEBI:29105"/>
    </ligand>
</feature>
<sequence>MALYRKYRPASFAEVVGQEHVTAPLSVALDAGRINHAYLFSGPRGCGKTSSARILARSLNCAQGPTANPCGVCESCVSLAPNAPGSIDVVELDAASHGGVDDTRELRDRAFYAPVQSRYRVFIVDEAHMVTTAGFNALLKIVEEPPEHLIFIFATTEPEKVLPTIRSRTHHYPFRLLPPRTMRALLARICEQEGVVVDDAVYPLVIRAGGGSPRDTLSVLDQLLAGAADTHVTYTRALGLLGVTDVALIDDAVDALAACDAAALFGAIESVIDGGHDPRRFATDLLERFRDLIVLQSVPDAASRGVVDAPEDALDRMREQAARIGRATLTRYAEVVQAGLGEMRGATAPRLLLEVVCARLLLPSASDAESALLQRVERIETRLDMSIPAPQAVPRPSAAAAEPKHQPAREPRPVLAPTPASSEPTVAAVRSMWPTVRDKVRLRSRTTEVMLAGATVRALEDNTLVLTHESAPLARRLSEQRNADVLAEALKDALGVNWRVRCETGEPAAAASPVGGGANVATAKAVNPAPTANSTQRDEEEHMLAEAGRGDPSPRRDPEEVALELLQNELGARRIDNA</sequence>
<name>DPO3X_MYCBO</name>
<comment type="function">
    <text>DNA polymerase III is a complex, multichain enzyme responsible for most of the replicative synthesis in bacteria. This DNA polymerase also exhibits 3' to 5' exonuclease activity.</text>
</comment>
<comment type="catalytic activity">
    <reaction>
        <text>DNA(n) + a 2'-deoxyribonucleoside 5'-triphosphate = DNA(n+1) + diphosphate</text>
        <dbReference type="Rhea" id="RHEA:22508"/>
        <dbReference type="Rhea" id="RHEA-COMP:17339"/>
        <dbReference type="Rhea" id="RHEA-COMP:17340"/>
        <dbReference type="ChEBI" id="CHEBI:33019"/>
        <dbReference type="ChEBI" id="CHEBI:61560"/>
        <dbReference type="ChEBI" id="CHEBI:173112"/>
        <dbReference type="EC" id="2.7.7.7"/>
    </reaction>
</comment>
<comment type="subunit">
    <text evidence="1">DNA polymerase III contains a core (composed of alpha, epsilon and theta chains) that associates with a tau subunit. This core dimerizes to form the POLIII' complex. PolIII' associates with the gamma complex (composed of gamma, delta, delta', psi and chi chains) and with the beta chain to form the complete DNA polymerase III complex (By similarity).</text>
</comment>
<comment type="similarity">
    <text evidence="5">Belongs to the DnaX/STICHEL family.</text>
</comment>
<protein>
    <recommendedName>
        <fullName>DNA polymerase III subunit gamma/tau</fullName>
        <ecNumber>2.7.7.7</ecNumber>
    </recommendedName>
</protein>